<organism>
    <name type="scientific">Androctonus australis</name>
    <name type="common">Sahara scorpion</name>
    <dbReference type="NCBI Taxonomy" id="6858"/>
    <lineage>
        <taxon>Eukaryota</taxon>
        <taxon>Metazoa</taxon>
        <taxon>Ecdysozoa</taxon>
        <taxon>Arthropoda</taxon>
        <taxon>Chelicerata</taxon>
        <taxon>Arachnida</taxon>
        <taxon>Scorpiones</taxon>
        <taxon>Buthida</taxon>
        <taxon>Buthoidea</taxon>
        <taxon>Buthidae</taxon>
        <taxon>Androctonus</taxon>
    </lineage>
</organism>
<comment type="subcellular location">
    <subcellularLocation>
        <location evidence="3">Secreted</location>
    </subcellularLocation>
</comment>
<comment type="tissue specificity">
    <text>Expressed by the venom gland.</text>
</comment>
<comment type="domain">
    <text evidence="3">Has the structural arrangement of an alpha-helix connected to antiparallel beta-sheets by disulfide bonds (CS-alpha/beta).</text>
</comment>
<comment type="similarity">
    <text evidence="3">Belongs to the long (3 C-C) scorpion toxin superfamily.</text>
</comment>
<name>SCXD_ANDAU</name>
<proteinExistence type="evidence at transcript level"/>
<keyword id="KW-1015">Disulfide bond</keyword>
<keyword id="KW-0872">Ion channel impairing toxin</keyword>
<keyword id="KW-0528">Neurotoxin</keyword>
<keyword id="KW-0964">Secreted</keyword>
<keyword id="KW-0732">Signal</keyword>
<keyword id="KW-0800">Toxin</keyword>
<protein>
    <recommendedName>
        <fullName>Probable neurotoxin pcD-996</fullName>
    </recommendedName>
</protein>
<dbReference type="EMBL" id="AJ308443">
    <property type="protein sequence ID" value="CAC37324.1"/>
    <property type="molecule type" value="mRNA"/>
</dbReference>
<dbReference type="SMR" id="Q9BLM1"/>
<dbReference type="GO" id="GO:0005576">
    <property type="term" value="C:extracellular region"/>
    <property type="evidence" value="ECO:0007669"/>
    <property type="project" value="UniProtKB-SubCell"/>
</dbReference>
<dbReference type="GO" id="GO:0019871">
    <property type="term" value="F:sodium channel inhibitor activity"/>
    <property type="evidence" value="ECO:0007669"/>
    <property type="project" value="InterPro"/>
</dbReference>
<dbReference type="GO" id="GO:0090729">
    <property type="term" value="F:toxin activity"/>
    <property type="evidence" value="ECO:0007669"/>
    <property type="project" value="UniProtKB-KW"/>
</dbReference>
<dbReference type="GO" id="GO:0006952">
    <property type="term" value="P:defense response"/>
    <property type="evidence" value="ECO:0007669"/>
    <property type="project" value="InterPro"/>
</dbReference>
<dbReference type="CDD" id="cd23106">
    <property type="entry name" value="neurotoxins_LC_scorpion"/>
    <property type="match status" value="1"/>
</dbReference>
<dbReference type="Gene3D" id="3.30.30.10">
    <property type="entry name" value="Knottin, scorpion toxin-like"/>
    <property type="match status" value="1"/>
</dbReference>
<dbReference type="InterPro" id="IPR044062">
    <property type="entry name" value="LCN-type_CS_alpha_beta_dom"/>
</dbReference>
<dbReference type="InterPro" id="IPR003614">
    <property type="entry name" value="Scorpion_toxin-like"/>
</dbReference>
<dbReference type="InterPro" id="IPR036574">
    <property type="entry name" value="Scorpion_toxin-like_sf"/>
</dbReference>
<dbReference type="InterPro" id="IPR002061">
    <property type="entry name" value="Scorpion_toxinL/defensin"/>
</dbReference>
<dbReference type="Pfam" id="PF00537">
    <property type="entry name" value="Toxin_3"/>
    <property type="match status" value="1"/>
</dbReference>
<dbReference type="SMART" id="SM00505">
    <property type="entry name" value="Knot1"/>
    <property type="match status" value="1"/>
</dbReference>
<dbReference type="SUPFAM" id="SSF57095">
    <property type="entry name" value="Scorpion toxin-like"/>
    <property type="match status" value="1"/>
</dbReference>
<dbReference type="PROSITE" id="PS51863">
    <property type="entry name" value="LCN_CSAB"/>
    <property type="match status" value="1"/>
</dbReference>
<accession>Q9BLM1</accession>
<feature type="signal peptide" evidence="1">
    <location>
        <begin position="1"/>
        <end position="19"/>
    </location>
</feature>
<feature type="chain" id="PRO_0000035229" description="Probable neurotoxin pcD-996">
    <location>
        <begin position="20"/>
        <end position="71"/>
    </location>
</feature>
<feature type="propeptide" id="PRO_0000035230" description="Removed by a carboxypeptidase" evidence="3">
    <location>
        <position position="72"/>
    </location>
</feature>
<feature type="domain" description="LCN-type CS-alpha/beta" evidence="2">
    <location>
        <begin position="21"/>
        <end position="72"/>
    </location>
</feature>
<feature type="disulfide bond" evidence="2">
    <location>
        <begin position="35"/>
        <end position="56"/>
    </location>
</feature>
<feature type="disulfide bond" evidence="2">
    <location>
        <begin position="42"/>
        <end position="66"/>
    </location>
</feature>
<feature type="disulfide bond" evidence="2">
    <location>
        <begin position="46"/>
        <end position="68"/>
    </location>
</feature>
<sequence>MNYLVMISFALLLVIGVESVRDGYFVEPDNCLVYCMPSPEICDRGCKRYGATSGFCKEFSKGENFCWCKGLR</sequence>
<evidence type="ECO:0000250" key="1"/>
<evidence type="ECO:0000255" key="2">
    <source>
        <dbReference type="PROSITE-ProRule" id="PRU01210"/>
    </source>
</evidence>
<evidence type="ECO:0000305" key="3"/>
<reference key="1">
    <citation type="journal article" date="2001" name="FEBS Lett.">
        <title>Evidence for a position-specific deletion as an evolutionary link between long- and short-chain scorpion toxins.</title>
        <authorList>
            <person name="Ceard B."/>
            <person name="Martin-Eauclaire M.-F."/>
            <person name="Bougis P.E."/>
        </authorList>
    </citation>
    <scope>NUCLEOTIDE SEQUENCE [MRNA]</scope>
    <source>
        <strain>Hector</strain>
    </source>
</reference>